<sequence>MAAPVSGRRMAYRASLALTMYCCSTGERLRFAMAPSPSARLINATRLVSIFFPNLCIESMESFRRRANPAAFFDPSLALSMILCACGRLIGLMPSPAMGWFIFPVSSLPSV</sequence>
<feature type="chain" id="PRO_0000077868" description="Putative protein p34">
    <location>
        <begin position="1"/>
        <end position="111"/>
    </location>
</feature>
<name>VP34_BPAPS</name>
<organism>
    <name type="scientific">Acyrthosiphon pisum secondary endosymbiont phage 1</name>
    <name type="common">Bacteriophage APSE-1</name>
    <dbReference type="NCBI Taxonomy" id="2682836"/>
    <lineage>
        <taxon>Viruses</taxon>
        <taxon>Duplodnaviria</taxon>
        <taxon>Heunggongvirae</taxon>
        <taxon>Uroviricota</taxon>
        <taxon>Caudoviricetes</taxon>
        <taxon>Sendosyvirus</taxon>
        <taxon>Sendosyvirus APSE1</taxon>
    </lineage>
</organism>
<gene>
    <name type="primary">34</name>
</gene>
<keyword id="KW-1185">Reference proteome</keyword>
<organismHost>
    <name type="scientific">Escherichia coli</name>
    <dbReference type="NCBI Taxonomy" id="562"/>
</organismHost>
<accession>Q9T1R4</accession>
<reference key="1">
    <citation type="journal article" date="1999" name="Virology">
        <title>Isolation and characterization of APSE-1, a bacteriophage infecting the secondary endosymbiont of acyrthosiphon pisum.</title>
        <authorList>
            <person name="van der Wilk F."/>
            <person name="Dullemans A.M."/>
            <person name="Verbeek M."/>
            <person name="van den Heuvel J.F.J.M."/>
        </authorList>
    </citation>
    <scope>NUCLEOTIDE SEQUENCE [LARGE SCALE GENOMIC DNA]</scope>
</reference>
<protein>
    <recommendedName>
        <fullName>Putative protein p34</fullName>
    </recommendedName>
</protein>
<proteinExistence type="predicted"/>
<dbReference type="EMBL" id="AF157835">
    <property type="protein sequence ID" value="AAF03977.1"/>
    <property type="molecule type" value="Genomic_DNA"/>
</dbReference>
<dbReference type="RefSeq" id="NP_050995.1">
    <property type="nucleotide sequence ID" value="NC_000935.1"/>
</dbReference>
<dbReference type="KEGG" id="vg:1262328"/>
<dbReference type="Proteomes" id="UP000000853">
    <property type="component" value="Genome"/>
</dbReference>